<proteinExistence type="inferred from homology"/>
<evidence type="ECO:0000255" key="1">
    <source>
        <dbReference type="HAMAP-Rule" id="MF_00274"/>
    </source>
</evidence>
<comment type="function">
    <text evidence="1">Binds to DNA and alters its conformation. May be involved in regulation of gene expression, nucleoid organization and DNA protection.</text>
</comment>
<comment type="subunit">
    <text evidence="1">Homodimer.</text>
</comment>
<comment type="subcellular location">
    <subcellularLocation>
        <location evidence="1">Cytoplasm</location>
        <location evidence="1">Nucleoid</location>
    </subcellularLocation>
</comment>
<comment type="similarity">
    <text evidence="1">Belongs to the YbaB/EbfC family.</text>
</comment>
<keyword id="KW-0963">Cytoplasm</keyword>
<keyword id="KW-0238">DNA-binding</keyword>
<sequence>MFGKGGLGNLMKQAQQMQEKMQKMQEEIAQLEVTGESGAGLVKVTINGAHNCRRVEIDPSLLEDDKEMLEDLVAAAFNDAARRIEETQKEKMASVSSGMQLPPGFKMPF</sequence>
<protein>
    <recommendedName>
        <fullName evidence="1">Nucleoid-associated protein YbaB</fullName>
    </recommendedName>
</protein>
<organism>
    <name type="scientific">Salmonella dublin (strain CT_02021853)</name>
    <dbReference type="NCBI Taxonomy" id="439851"/>
    <lineage>
        <taxon>Bacteria</taxon>
        <taxon>Pseudomonadati</taxon>
        <taxon>Pseudomonadota</taxon>
        <taxon>Gammaproteobacteria</taxon>
        <taxon>Enterobacterales</taxon>
        <taxon>Enterobacteriaceae</taxon>
        <taxon>Salmonella</taxon>
    </lineage>
</organism>
<dbReference type="EMBL" id="CP001144">
    <property type="protein sequence ID" value="ACH74682.1"/>
    <property type="molecule type" value="Genomic_DNA"/>
</dbReference>
<dbReference type="RefSeq" id="WP_000467098.1">
    <property type="nucleotide sequence ID" value="NC_011205.1"/>
</dbReference>
<dbReference type="SMR" id="B5FKY9"/>
<dbReference type="KEGG" id="sed:SeD_A0530"/>
<dbReference type="HOGENOM" id="CLU_140930_0_0_6"/>
<dbReference type="Proteomes" id="UP000008322">
    <property type="component" value="Chromosome"/>
</dbReference>
<dbReference type="GO" id="GO:0043590">
    <property type="term" value="C:bacterial nucleoid"/>
    <property type="evidence" value="ECO:0007669"/>
    <property type="project" value="UniProtKB-UniRule"/>
</dbReference>
<dbReference type="GO" id="GO:0005829">
    <property type="term" value="C:cytosol"/>
    <property type="evidence" value="ECO:0007669"/>
    <property type="project" value="TreeGrafter"/>
</dbReference>
<dbReference type="GO" id="GO:0003677">
    <property type="term" value="F:DNA binding"/>
    <property type="evidence" value="ECO:0007669"/>
    <property type="project" value="UniProtKB-UniRule"/>
</dbReference>
<dbReference type="FunFam" id="3.30.1310.10:FF:000001">
    <property type="entry name" value="Nucleoid-associated protein YbaB"/>
    <property type="match status" value="1"/>
</dbReference>
<dbReference type="Gene3D" id="3.30.1310.10">
    <property type="entry name" value="Nucleoid-associated protein YbaB-like domain"/>
    <property type="match status" value="1"/>
</dbReference>
<dbReference type="HAMAP" id="MF_00274">
    <property type="entry name" value="DNA_YbaB_EbfC"/>
    <property type="match status" value="1"/>
</dbReference>
<dbReference type="InterPro" id="IPR036894">
    <property type="entry name" value="YbaB-like_sf"/>
</dbReference>
<dbReference type="InterPro" id="IPR004401">
    <property type="entry name" value="YbaB/EbfC"/>
</dbReference>
<dbReference type="NCBIfam" id="TIGR00103">
    <property type="entry name" value="DNA_YbaB_EbfC"/>
    <property type="match status" value="1"/>
</dbReference>
<dbReference type="PANTHER" id="PTHR33449">
    <property type="entry name" value="NUCLEOID-ASSOCIATED PROTEIN YBAB"/>
    <property type="match status" value="1"/>
</dbReference>
<dbReference type="PANTHER" id="PTHR33449:SF1">
    <property type="entry name" value="NUCLEOID-ASSOCIATED PROTEIN YBAB"/>
    <property type="match status" value="1"/>
</dbReference>
<dbReference type="Pfam" id="PF02575">
    <property type="entry name" value="YbaB_DNA_bd"/>
    <property type="match status" value="1"/>
</dbReference>
<dbReference type="PIRSF" id="PIRSF004555">
    <property type="entry name" value="UCP004555"/>
    <property type="match status" value="1"/>
</dbReference>
<dbReference type="SUPFAM" id="SSF82607">
    <property type="entry name" value="YbaB-like"/>
    <property type="match status" value="1"/>
</dbReference>
<reference key="1">
    <citation type="journal article" date="2011" name="J. Bacteriol.">
        <title>Comparative genomics of 28 Salmonella enterica isolates: evidence for CRISPR-mediated adaptive sublineage evolution.</title>
        <authorList>
            <person name="Fricke W.F."/>
            <person name="Mammel M.K."/>
            <person name="McDermott P.F."/>
            <person name="Tartera C."/>
            <person name="White D.G."/>
            <person name="Leclerc J.E."/>
            <person name="Ravel J."/>
            <person name="Cebula T.A."/>
        </authorList>
    </citation>
    <scope>NUCLEOTIDE SEQUENCE [LARGE SCALE GENOMIC DNA]</scope>
    <source>
        <strain>CT_02021853</strain>
    </source>
</reference>
<feature type="chain" id="PRO_1000114641" description="Nucleoid-associated protein YbaB">
    <location>
        <begin position="1"/>
        <end position="109"/>
    </location>
</feature>
<name>YBAB_SALDC</name>
<accession>B5FKY9</accession>
<gene>
    <name evidence="1" type="primary">ybaB</name>
    <name type="ordered locus">SeD_A0530</name>
</gene>